<feature type="signal peptide" evidence="1">
    <location>
        <begin position="1"/>
        <end position="26"/>
    </location>
</feature>
<feature type="chain" id="PRO_1000085449" description="Cytochrome c-552">
    <location>
        <begin position="27"/>
        <end position="478"/>
    </location>
</feature>
<feature type="binding site" description="axial binding residue" evidence="1">
    <location>
        <position position="94"/>
    </location>
    <ligand>
        <name>heme c</name>
        <dbReference type="ChEBI" id="CHEBI:61717"/>
        <label>3</label>
    </ligand>
    <ligandPart>
        <name>Fe</name>
        <dbReference type="ChEBI" id="CHEBI:18248"/>
    </ligandPart>
</feature>
<feature type="binding site" description="covalent" evidence="1">
    <location>
        <position position="122"/>
    </location>
    <ligand>
        <name>heme</name>
        <dbReference type="ChEBI" id="CHEBI:30413"/>
        <label>1</label>
    </ligand>
</feature>
<feature type="binding site" description="covalent" evidence="1">
    <location>
        <position position="125"/>
    </location>
    <ligand>
        <name>heme</name>
        <dbReference type="ChEBI" id="CHEBI:30413"/>
        <label>1</label>
    </ligand>
</feature>
<feature type="binding site" description="axial binding residue" evidence="1">
    <location>
        <position position="126"/>
    </location>
    <ligand>
        <name>heme</name>
        <dbReference type="ChEBI" id="CHEBI:30413"/>
        <label>1</label>
    </ligand>
    <ligandPart>
        <name>Fe</name>
        <dbReference type="ChEBI" id="CHEBI:18248"/>
    </ligandPart>
</feature>
<feature type="binding site" description="covalent" evidence="1">
    <location>
        <position position="160"/>
    </location>
    <ligand>
        <name>heme c</name>
        <dbReference type="ChEBI" id="CHEBI:61717"/>
        <label>2</label>
    </ligand>
</feature>
<feature type="binding site" description="covalent" evidence="1">
    <location>
        <position position="163"/>
    </location>
    <ligand>
        <name>heme c</name>
        <dbReference type="ChEBI" id="CHEBI:61717"/>
        <label>2</label>
    </ligand>
</feature>
<feature type="binding site" description="axial binding residue" evidence="1">
    <location>
        <position position="164"/>
    </location>
    <ligand>
        <name>heme c</name>
        <dbReference type="ChEBI" id="CHEBI:61717"/>
        <label>2</label>
    </ligand>
    <ligandPart>
        <name>Fe</name>
        <dbReference type="ChEBI" id="CHEBI:18248"/>
    </ligandPart>
</feature>
<feature type="binding site" description="covalent" evidence="1">
    <location>
        <position position="209"/>
    </location>
    <ligand>
        <name>heme c</name>
        <dbReference type="ChEBI" id="CHEBI:61717"/>
        <label>3</label>
    </ligand>
</feature>
<feature type="binding site" description="covalent" evidence="1">
    <location>
        <position position="212"/>
    </location>
    <ligand>
        <name>heme c</name>
        <dbReference type="ChEBI" id="CHEBI:61717"/>
        <label>3</label>
    </ligand>
</feature>
<feature type="binding site" description="axial binding residue" evidence="1">
    <location>
        <position position="213"/>
    </location>
    <ligand>
        <name>heme c</name>
        <dbReference type="ChEBI" id="CHEBI:61717"/>
        <label>3</label>
    </ligand>
    <ligandPart>
        <name>Fe</name>
        <dbReference type="ChEBI" id="CHEBI:18248"/>
    </ligandPart>
</feature>
<feature type="binding site" evidence="1">
    <location>
        <position position="215"/>
    </location>
    <ligand>
        <name>Ca(2+)</name>
        <dbReference type="ChEBI" id="CHEBI:29108"/>
    </ligand>
</feature>
<feature type="binding site" evidence="1">
    <location>
        <position position="216"/>
    </location>
    <ligand>
        <name>Ca(2+)</name>
        <dbReference type="ChEBI" id="CHEBI:29108"/>
    </ligand>
</feature>
<feature type="binding site" evidence="1">
    <location>
        <position position="216"/>
    </location>
    <ligand>
        <name>substrate</name>
    </ligand>
</feature>
<feature type="binding site" evidence="1">
    <location>
        <position position="261"/>
    </location>
    <ligand>
        <name>Ca(2+)</name>
        <dbReference type="ChEBI" id="CHEBI:29108"/>
    </ligand>
</feature>
<feature type="binding site" evidence="1">
    <location>
        <position position="263"/>
    </location>
    <ligand>
        <name>Ca(2+)</name>
        <dbReference type="ChEBI" id="CHEBI:29108"/>
    </ligand>
</feature>
<feature type="binding site" evidence="1">
    <location>
        <position position="264"/>
    </location>
    <ligand>
        <name>substrate</name>
    </ligand>
</feature>
<feature type="binding site" description="axial binding residue" evidence="1">
    <location>
        <position position="275"/>
    </location>
    <ligand>
        <name>heme c</name>
        <dbReference type="ChEBI" id="CHEBI:61717"/>
        <label>5</label>
    </ligand>
    <ligandPart>
        <name>Fe</name>
        <dbReference type="ChEBI" id="CHEBI:18248"/>
    </ligandPart>
</feature>
<feature type="binding site" description="covalent" evidence="1">
    <location>
        <position position="282"/>
    </location>
    <ligand>
        <name>heme c</name>
        <dbReference type="ChEBI" id="CHEBI:61717"/>
        <label>4</label>
    </ligand>
</feature>
<feature type="binding site" description="covalent" evidence="1">
    <location>
        <position position="285"/>
    </location>
    <ligand>
        <name>heme c</name>
        <dbReference type="ChEBI" id="CHEBI:61717"/>
        <label>4</label>
    </ligand>
</feature>
<feature type="binding site" description="axial binding residue" evidence="1">
    <location>
        <position position="286"/>
    </location>
    <ligand>
        <name>heme c</name>
        <dbReference type="ChEBI" id="CHEBI:61717"/>
        <label>4</label>
    </ligand>
    <ligandPart>
        <name>Fe</name>
        <dbReference type="ChEBI" id="CHEBI:18248"/>
    </ligandPart>
</feature>
<feature type="binding site" description="axial binding residue" evidence="1">
    <location>
        <position position="301"/>
    </location>
    <ligand>
        <name>heme c</name>
        <dbReference type="ChEBI" id="CHEBI:61717"/>
        <label>2</label>
    </ligand>
    <ligandPart>
        <name>Fe</name>
        <dbReference type="ChEBI" id="CHEBI:18248"/>
    </ligandPart>
</feature>
<feature type="binding site" description="covalent" evidence="1">
    <location>
        <position position="314"/>
    </location>
    <ligand>
        <name>heme c</name>
        <dbReference type="ChEBI" id="CHEBI:61717"/>
        <label>5</label>
    </ligand>
</feature>
<feature type="binding site" description="covalent" evidence="1">
    <location>
        <position position="317"/>
    </location>
    <ligand>
        <name>heme c</name>
        <dbReference type="ChEBI" id="CHEBI:61717"/>
        <label>5</label>
    </ligand>
</feature>
<feature type="binding site" description="axial binding residue" evidence="1">
    <location>
        <position position="318"/>
    </location>
    <ligand>
        <name>heme c</name>
        <dbReference type="ChEBI" id="CHEBI:61717"/>
        <label>5</label>
    </ligand>
    <ligandPart>
        <name>Fe</name>
        <dbReference type="ChEBI" id="CHEBI:18248"/>
    </ligandPart>
</feature>
<feature type="binding site" description="axial binding residue" evidence="1">
    <location>
        <position position="393"/>
    </location>
    <ligand>
        <name>heme c</name>
        <dbReference type="ChEBI" id="CHEBI:61717"/>
        <label>4</label>
    </ligand>
    <ligandPart>
        <name>Fe</name>
        <dbReference type="ChEBI" id="CHEBI:18248"/>
    </ligandPart>
</feature>
<dbReference type="EC" id="1.7.2.2" evidence="1"/>
<dbReference type="EMBL" id="CP000886">
    <property type="protein sequence ID" value="ABX70548.1"/>
    <property type="molecule type" value="Genomic_DNA"/>
</dbReference>
<dbReference type="RefSeq" id="WP_000101770.1">
    <property type="nucleotide sequence ID" value="NC_010102.1"/>
</dbReference>
<dbReference type="SMR" id="A9N1R7"/>
<dbReference type="KEGG" id="spq:SPAB_05272"/>
<dbReference type="PATRIC" id="fig|1016998.12.peg.4938"/>
<dbReference type="HOGENOM" id="CLU_035040_1_0_6"/>
<dbReference type="BioCyc" id="SENT1016998:SPAB_RS21465-MONOMER"/>
<dbReference type="UniPathway" id="UPA00653"/>
<dbReference type="Proteomes" id="UP000008556">
    <property type="component" value="Chromosome"/>
</dbReference>
<dbReference type="GO" id="GO:0030288">
    <property type="term" value="C:outer membrane-bounded periplasmic space"/>
    <property type="evidence" value="ECO:0007669"/>
    <property type="project" value="TreeGrafter"/>
</dbReference>
<dbReference type="GO" id="GO:0005509">
    <property type="term" value="F:calcium ion binding"/>
    <property type="evidence" value="ECO:0007669"/>
    <property type="project" value="UniProtKB-UniRule"/>
</dbReference>
<dbReference type="GO" id="GO:0020037">
    <property type="term" value="F:heme binding"/>
    <property type="evidence" value="ECO:0007669"/>
    <property type="project" value="InterPro"/>
</dbReference>
<dbReference type="GO" id="GO:0005506">
    <property type="term" value="F:iron ion binding"/>
    <property type="evidence" value="ECO:0007669"/>
    <property type="project" value="UniProtKB-UniRule"/>
</dbReference>
<dbReference type="GO" id="GO:0042279">
    <property type="term" value="F:nitrite reductase (cytochrome, ammonia-forming) activity"/>
    <property type="evidence" value="ECO:0007669"/>
    <property type="project" value="UniProtKB-UniRule"/>
</dbReference>
<dbReference type="GO" id="GO:0019645">
    <property type="term" value="P:anaerobic electron transport chain"/>
    <property type="evidence" value="ECO:0007669"/>
    <property type="project" value="TreeGrafter"/>
</dbReference>
<dbReference type="GO" id="GO:0042128">
    <property type="term" value="P:nitrate assimilation"/>
    <property type="evidence" value="ECO:0007669"/>
    <property type="project" value="UniProtKB-UniRule"/>
</dbReference>
<dbReference type="CDD" id="cd00548">
    <property type="entry name" value="NrfA-like"/>
    <property type="match status" value="1"/>
</dbReference>
<dbReference type="FunFam" id="1.10.1130.10:FF:000002">
    <property type="entry name" value="Cytochrome c-552"/>
    <property type="match status" value="1"/>
</dbReference>
<dbReference type="FunFam" id="1.20.140.10:FF:000014">
    <property type="entry name" value="Cytochrome c-552"/>
    <property type="match status" value="1"/>
</dbReference>
<dbReference type="Gene3D" id="1.20.140.10">
    <property type="entry name" value="Butyryl-CoA Dehydrogenase, subunit A, domain 3"/>
    <property type="match status" value="1"/>
</dbReference>
<dbReference type="Gene3D" id="1.10.1130.10">
    <property type="entry name" value="Flavocytochrome C3, Chain A"/>
    <property type="match status" value="1"/>
</dbReference>
<dbReference type="HAMAP" id="MF_01182">
    <property type="entry name" value="Cytochrom_C552"/>
    <property type="match status" value="1"/>
</dbReference>
<dbReference type="InterPro" id="IPR003321">
    <property type="entry name" value="Cyt_c552"/>
</dbReference>
<dbReference type="InterPro" id="IPR017570">
    <property type="entry name" value="Cyt_c_NO2Rdtase_formate-dep"/>
</dbReference>
<dbReference type="InterPro" id="IPR036280">
    <property type="entry name" value="Multihaem_cyt_sf"/>
</dbReference>
<dbReference type="NCBIfam" id="TIGR03152">
    <property type="entry name" value="cyto_c552_HCOOH"/>
    <property type="match status" value="1"/>
</dbReference>
<dbReference type="NCBIfam" id="NF008339">
    <property type="entry name" value="PRK11125.1"/>
    <property type="match status" value="1"/>
</dbReference>
<dbReference type="PANTHER" id="PTHR30633:SF0">
    <property type="entry name" value="CYTOCHROME C-552"/>
    <property type="match status" value="1"/>
</dbReference>
<dbReference type="PANTHER" id="PTHR30633">
    <property type="entry name" value="CYTOCHROME C-552 RESPIRATORY NITRITE REDUCTASE"/>
    <property type="match status" value="1"/>
</dbReference>
<dbReference type="Pfam" id="PF02335">
    <property type="entry name" value="Cytochrom_C552"/>
    <property type="match status" value="1"/>
</dbReference>
<dbReference type="PIRSF" id="PIRSF000243">
    <property type="entry name" value="Cyt_c552"/>
    <property type="match status" value="1"/>
</dbReference>
<dbReference type="SUPFAM" id="SSF48695">
    <property type="entry name" value="Multiheme cytochromes"/>
    <property type="match status" value="1"/>
</dbReference>
<dbReference type="PROSITE" id="PS51008">
    <property type="entry name" value="MULTIHEME_CYTC"/>
    <property type="match status" value="1"/>
</dbReference>
<reference key="1">
    <citation type="submission" date="2007-11" db="EMBL/GenBank/DDBJ databases">
        <authorList>
            <consortium name="The Salmonella enterica serovar Paratyphi B Genome Sequencing Project"/>
            <person name="McClelland M."/>
            <person name="Sanderson E.K."/>
            <person name="Porwollik S."/>
            <person name="Spieth J."/>
            <person name="Clifton W.S."/>
            <person name="Fulton R."/>
            <person name="Cordes M."/>
            <person name="Wollam A."/>
            <person name="Shah N."/>
            <person name="Pepin K."/>
            <person name="Bhonagiri V."/>
            <person name="Nash W."/>
            <person name="Johnson M."/>
            <person name="Thiruvilangam P."/>
            <person name="Wilson R."/>
        </authorList>
    </citation>
    <scope>NUCLEOTIDE SEQUENCE [LARGE SCALE GENOMIC DNA]</scope>
    <source>
        <strain>ATCC BAA-1250 / SPB7</strain>
    </source>
</reference>
<name>NRFA_SALPB</name>
<comment type="function">
    <text evidence="1">Catalyzes the reduction of nitrite to ammonia, consuming six electrons in the process.</text>
</comment>
<comment type="catalytic activity">
    <reaction evidence="1">
        <text>6 Fe(III)-[cytochrome c] + NH4(+) + 2 H2O = 6 Fe(II)-[cytochrome c] + nitrite + 8 H(+)</text>
        <dbReference type="Rhea" id="RHEA:13089"/>
        <dbReference type="Rhea" id="RHEA-COMP:10350"/>
        <dbReference type="Rhea" id="RHEA-COMP:14399"/>
        <dbReference type="ChEBI" id="CHEBI:15377"/>
        <dbReference type="ChEBI" id="CHEBI:15378"/>
        <dbReference type="ChEBI" id="CHEBI:16301"/>
        <dbReference type="ChEBI" id="CHEBI:28938"/>
        <dbReference type="ChEBI" id="CHEBI:29033"/>
        <dbReference type="ChEBI" id="CHEBI:29034"/>
        <dbReference type="EC" id="1.7.2.2"/>
    </reaction>
</comment>
<comment type="cofactor">
    <cofactor evidence="1">
        <name>Ca(2+)</name>
        <dbReference type="ChEBI" id="CHEBI:29108"/>
    </cofactor>
    <text evidence="1">Binds 1 Ca(2+) ion per monomer.</text>
</comment>
<comment type="cofactor">
    <cofactor evidence="1">
        <name>heme c</name>
        <dbReference type="ChEBI" id="CHEBI:61717"/>
    </cofactor>
    <text evidence="1">Binds 5 heme c groups covalently per monomer.</text>
</comment>
<comment type="pathway">
    <text evidence="1">Nitrogen metabolism; nitrate reduction (assimilation).</text>
</comment>
<comment type="subcellular location">
    <subcellularLocation>
        <location evidence="1">Periplasm</location>
    </subcellularLocation>
</comment>
<comment type="similarity">
    <text evidence="1">Belongs to the cytochrome c-552 family.</text>
</comment>
<sequence>MARKTLRARRFFSLIFPFFFITSVYAEQTPESAKTVTVEAKNEMFAPQHPDQYQSWKATSEQSAREDALAEDPRLVILWAGYPFSRDYNKPRGHAYAVTDVRETLRTGAPKTAEDGPLPMACWSCKSPDVARLIQQEGEDGYFHGKWARGGPEIVNDLGCADCHNTASDDFAQGKPALTLSRPYAERAMEAIGKPFDKAGRFDQQSMVCGQCHVEYYFDGKNKAVKFPWDEGMKVENMEQYYDAIAFSDWTNSLSKTPMLKAQHPEYETWSAGIHGKNNVTCIDCHMPKVQNAEGKLYTDHKIGNPFDNFAQTCANCHTQDKASLQKVVAERKQAIHDLKIKVEDQLVHAHFEAKAAWDAGATDAEMKPILNDIRHAQWRWDLAIASHGIHMHAPEEGLRMLGSAMDKAADARTKLARLLATKGITHEIPLPDISTKEKAQKAIGLNMQQINAEKQDFLKTVVPQWEDQARKNGLLSQ</sequence>
<evidence type="ECO:0000255" key="1">
    <source>
        <dbReference type="HAMAP-Rule" id="MF_01182"/>
    </source>
</evidence>
<accession>A9N1R7</accession>
<proteinExistence type="inferred from homology"/>
<protein>
    <recommendedName>
        <fullName evidence="1">Cytochrome c-552</fullName>
        <ecNumber evidence="1">1.7.2.2</ecNumber>
    </recommendedName>
    <alternativeName>
        <fullName evidence="1">Ammonia-forming cytochrome c nitrite reductase</fullName>
        <shortName evidence="1">Cytochrome c nitrite reductase</shortName>
    </alternativeName>
</protein>
<gene>
    <name evidence="1" type="primary">nrfA</name>
    <name type="ordered locus">SPAB_05272</name>
</gene>
<keyword id="KW-0106">Calcium</keyword>
<keyword id="KW-0249">Electron transport</keyword>
<keyword id="KW-0349">Heme</keyword>
<keyword id="KW-0408">Iron</keyword>
<keyword id="KW-0479">Metal-binding</keyword>
<keyword id="KW-0560">Oxidoreductase</keyword>
<keyword id="KW-0574">Periplasm</keyword>
<keyword id="KW-0732">Signal</keyword>
<keyword id="KW-0813">Transport</keyword>
<organism>
    <name type="scientific">Salmonella paratyphi B (strain ATCC BAA-1250 / SPB7)</name>
    <dbReference type="NCBI Taxonomy" id="1016998"/>
    <lineage>
        <taxon>Bacteria</taxon>
        <taxon>Pseudomonadati</taxon>
        <taxon>Pseudomonadota</taxon>
        <taxon>Gammaproteobacteria</taxon>
        <taxon>Enterobacterales</taxon>
        <taxon>Enterobacteriaceae</taxon>
        <taxon>Salmonella</taxon>
    </lineage>
</organism>